<protein>
    <recommendedName>
        <fullName>Peroxisomal membrane protein 11A</fullName>
    </recommendedName>
    <alternativeName>
        <fullName>28 kDa peroxisomal integral membrane protein</fullName>
        <shortName>PMP28</shortName>
    </alternativeName>
    <alternativeName>
        <fullName>Peroxin-11A</fullName>
    </alternativeName>
    <alternativeName>
        <fullName>Peroxisomal biogenesis factor 11A</fullName>
    </alternativeName>
    <alternativeName>
        <fullName>Peroxisomal coatomer receptor</fullName>
    </alternativeName>
    <alternativeName>
        <fullName>Peroxisomal membrane protein 26</fullName>
        <shortName>Pmp26p</shortName>
    </alternativeName>
    <alternativeName>
        <fullName>Protein PEX11 homolog alpha</fullName>
        <shortName>PEX11-alpha</shortName>
    </alternativeName>
    <alternativeName>
        <fullName>RnPEX11p</fullName>
    </alternativeName>
</protein>
<proteinExistence type="evidence at protein level"/>
<evidence type="ECO:0000250" key="1">
    <source>
        <dbReference type="UniProtKB" id="O75192"/>
    </source>
</evidence>
<evidence type="ECO:0000255" key="2"/>
<evidence type="ECO:0000269" key="3">
    <source>
    </source>
</evidence>
<evidence type="ECO:0000269" key="4">
    <source>
    </source>
</evidence>
<evidence type="ECO:0000269" key="5">
    <source>
    </source>
</evidence>
<evidence type="ECO:0000305" key="6"/>
<sequence length="246" mass="27923">MDAFIRVANQSQGRDRLFRATQHACMLLRYLLESKAGKEAVVTKLKNLETSVSTGRKWFRLGNVLHAIQATEQSIQATDLVPRLCLTLANLNRVVYYICDTVLWAKSVGLTSGINREKWQMRAARHYYYFLLLSLVRDLYEVLLHMGQVARDRAKREKSSGDPPKYSVANEESEWLQSFLLLLFQSLKRNPPLFLDTVKNFCDILIPLNQLGIYKSNLGVVGFGGLVSSVAGLITVVYPQLKLKAR</sequence>
<keyword id="KW-0472">Membrane</keyword>
<keyword id="KW-0576">Peroxisome</keyword>
<keyword id="KW-0962">Peroxisome biogenesis</keyword>
<keyword id="KW-1185">Reference proteome</keyword>
<keyword id="KW-0812">Transmembrane</keyword>
<keyword id="KW-1133">Transmembrane helix</keyword>
<comment type="function">
    <text evidence="1 3">May be involved in peroxisomal proliferation and may regulate peroxisomes division. May mediate binding of coatomer proteins to the peroxisomal membrane (PubMed:9548716). Promotes membrane protrusion and elongation on the peroxisomal surface.</text>
</comment>
<comment type="subunit">
    <text evidence="1 3">Homodimer (By similarity). Heterodimer with PEX11G (By similarity). Probably interacts with COPB2 and COPA (PubMed:9548716). Interacts with PEX19 (By similarity). Interacts with FIS1 (By similarity).</text>
</comment>
<comment type="subcellular location">
    <subcellularLocation>
        <location evidence="3">Peroxisome membrane</location>
        <topology evidence="3">Multi-pass membrane protein</topology>
    </subcellularLocation>
</comment>
<comment type="tissue specificity">
    <text evidence="5">Expressed at high levels in kidney, liver, lung, brain, and testis and at low levels in heart, spleen and skeletal muscle.</text>
</comment>
<comment type="induction">
    <text evidence="4 5">Induced by clofibrate and di(2-ethylhexyl)phtalate (DEHP).</text>
</comment>
<comment type="similarity">
    <text evidence="6">Belongs to the peroxin-11 family.</text>
</comment>
<reference key="1">
    <citation type="journal article" date="1998" name="J. Cell Biol.">
        <title>Peroxisome biogenesis: involvement of ARF and coatomer.</title>
        <authorList>
            <person name="Passreiter M."/>
            <person name="Anton M."/>
            <person name="Lay D."/>
            <person name="Frank R."/>
            <person name="Harter C."/>
            <person name="Wieland F.T."/>
            <person name="Gorgas K."/>
            <person name="Just W.W."/>
        </authorList>
    </citation>
    <scope>NUCLEOTIDE SEQUENCE [MRNA]</scope>
    <scope>SUBCELLULAR LOCATION</scope>
    <scope>TOPOLOGY</scope>
    <scope>FUNCTION</scope>
    <scope>MUTAGENESIS OF 242-LYS--LYS-244</scope>
    <scope>INTERACTION WITH COPB2 AND COPA</scope>
    <source>
        <tissue>Liver</tissue>
    </source>
</reference>
<reference key="2">
    <citation type="journal article" date="1998" name="FEBS Lett.">
        <title>Clofibrate-inducible, 28-kDa peroxisomal integral membrane protein is encoded by PEX11.</title>
        <authorList>
            <person name="Abe I."/>
            <person name="Okumoto K."/>
            <person name="Tamura S."/>
            <person name="Fujiki Y."/>
        </authorList>
    </citation>
    <scope>INDUCTION</scope>
    <source>
        <tissue>Liver</tissue>
    </source>
</reference>
<reference key="3">
    <citation type="journal article" date="1998" name="J. Biol. Chem.">
        <title>Expression of PEX11beta mediates peroxisome proliferation in the absence of extracellular stimuli.</title>
        <authorList>
            <person name="Schrader M."/>
            <person name="Reuber B.E."/>
            <person name="Morrell J.C."/>
            <person name="Jimenez-Sanchez G."/>
            <person name="Obie C."/>
            <person name="Stroh T.A."/>
            <person name="Valle D."/>
            <person name="Schroer T.A."/>
            <person name="Gould S.J."/>
        </authorList>
    </citation>
    <scope>TISSUE SPECIFICITY</scope>
    <scope>INDUCTION</scope>
</reference>
<gene>
    <name type="primary">Pex11a</name>
    <name type="synonym">Pex11</name>
</gene>
<feature type="chain" id="PRO_0000105966" description="Peroxisomal membrane protein 11A">
    <location>
        <begin position="1"/>
        <end position="246"/>
    </location>
</feature>
<feature type="topological domain" description="Cytoplasmic" evidence="2">
    <location>
        <begin position="1"/>
        <end position="93"/>
    </location>
</feature>
<feature type="transmembrane region" description="Helical" evidence="2">
    <location>
        <begin position="94"/>
        <end position="114"/>
    </location>
</feature>
<feature type="topological domain" description="Lumenal" evidence="2">
    <location>
        <begin position="115"/>
        <end position="217"/>
    </location>
</feature>
<feature type="transmembrane region" description="Helical" evidence="2">
    <location>
        <begin position="218"/>
        <end position="238"/>
    </location>
</feature>
<feature type="topological domain" description="Cytoplasmic" evidence="2">
    <location>
        <begin position="239"/>
        <end position="246"/>
    </location>
</feature>
<feature type="region of interest" description="Required for homodimerization, interaction with PEX11G, and peroxisomal localization" evidence="1">
    <location>
        <begin position="218"/>
        <end position="238"/>
    </location>
</feature>
<feature type="mutagenesis site" description="Loss of interactions with COPA and COPB2." evidence="3">
    <original>KLK</original>
    <variation>SLS</variation>
    <location>
        <begin position="242"/>
        <end position="244"/>
    </location>
</feature>
<feature type="mutagenesis site" description="Loss of interactions with COPA and COPB2.">
    <original>K</original>
    <variation>S</variation>
    <location>
        <position position="244"/>
    </location>
</feature>
<organism>
    <name type="scientific">Rattus norvegicus</name>
    <name type="common">Rat</name>
    <dbReference type="NCBI Taxonomy" id="10116"/>
    <lineage>
        <taxon>Eukaryota</taxon>
        <taxon>Metazoa</taxon>
        <taxon>Chordata</taxon>
        <taxon>Craniata</taxon>
        <taxon>Vertebrata</taxon>
        <taxon>Euteleostomi</taxon>
        <taxon>Mammalia</taxon>
        <taxon>Eutheria</taxon>
        <taxon>Euarchontoglires</taxon>
        <taxon>Glires</taxon>
        <taxon>Rodentia</taxon>
        <taxon>Myomorpha</taxon>
        <taxon>Muroidea</taxon>
        <taxon>Muridae</taxon>
        <taxon>Murinae</taxon>
        <taxon>Rattus</taxon>
    </lineage>
</organism>
<accession>O70597</accession>
<accession>Q6P749</accession>
<dbReference type="EMBL" id="AJ224120">
    <property type="protein sequence ID" value="CAA11838.1"/>
    <property type="molecule type" value="mRNA"/>
</dbReference>
<dbReference type="RefSeq" id="NP_445939.1">
    <property type="nucleotide sequence ID" value="NM_053487.2"/>
</dbReference>
<dbReference type="SMR" id="O70597"/>
<dbReference type="FunCoup" id="O70597">
    <property type="interactions" value="349"/>
</dbReference>
<dbReference type="IntAct" id="O70597">
    <property type="interactions" value="1"/>
</dbReference>
<dbReference type="MINT" id="O70597"/>
<dbReference type="STRING" id="10116.ENSRNOP00000020229"/>
<dbReference type="PhosphoSitePlus" id="O70597"/>
<dbReference type="PaxDb" id="10116-ENSRNOP00000020229"/>
<dbReference type="Ensembl" id="ENSRNOT00000020229.7">
    <property type="protein sequence ID" value="ENSRNOP00000020229.4"/>
    <property type="gene ID" value="ENSRNOG00000015003.7"/>
</dbReference>
<dbReference type="GeneID" id="85249"/>
<dbReference type="KEGG" id="rno:85249"/>
<dbReference type="UCSC" id="RGD:619842">
    <property type="organism name" value="rat"/>
</dbReference>
<dbReference type="AGR" id="RGD:619842"/>
<dbReference type="CTD" id="8800"/>
<dbReference type="RGD" id="619842">
    <property type="gene designation" value="Pex11a"/>
</dbReference>
<dbReference type="eggNOG" id="KOG4186">
    <property type="taxonomic scope" value="Eukaryota"/>
</dbReference>
<dbReference type="GeneTree" id="ENSGT00390000014273"/>
<dbReference type="HOGENOM" id="CLU_049216_2_0_1"/>
<dbReference type="InParanoid" id="O70597"/>
<dbReference type="OMA" id="AKRTMQL"/>
<dbReference type="OrthoDB" id="411017at2759"/>
<dbReference type="PhylomeDB" id="O70597"/>
<dbReference type="TreeFam" id="TF325704"/>
<dbReference type="PRO" id="PR:O70597"/>
<dbReference type="Proteomes" id="UP000002494">
    <property type="component" value="Chromosome 1"/>
</dbReference>
<dbReference type="Bgee" id="ENSRNOG00000015003">
    <property type="expression patterns" value="Expressed in kidney and 19 other cell types or tissues"/>
</dbReference>
<dbReference type="GO" id="GO:0005778">
    <property type="term" value="C:peroxisomal membrane"/>
    <property type="evidence" value="ECO:0000314"/>
    <property type="project" value="HGNC-UCL"/>
</dbReference>
<dbReference type="GO" id="GO:0005777">
    <property type="term" value="C:peroxisome"/>
    <property type="evidence" value="ECO:0000266"/>
    <property type="project" value="RGD"/>
</dbReference>
<dbReference type="GO" id="GO:0032991">
    <property type="term" value="C:protein-containing complex"/>
    <property type="evidence" value="ECO:0000266"/>
    <property type="project" value="RGD"/>
</dbReference>
<dbReference type="GO" id="GO:0042803">
    <property type="term" value="F:protein homodimerization activity"/>
    <property type="evidence" value="ECO:0000266"/>
    <property type="project" value="RGD"/>
</dbReference>
<dbReference type="GO" id="GO:0050873">
    <property type="term" value="P:brown fat cell differentiation"/>
    <property type="evidence" value="ECO:0000266"/>
    <property type="project" value="RGD"/>
</dbReference>
<dbReference type="GO" id="GO:0016559">
    <property type="term" value="P:peroxisome fission"/>
    <property type="evidence" value="ECO:0000266"/>
    <property type="project" value="RGD"/>
</dbReference>
<dbReference type="GO" id="GO:0016557">
    <property type="term" value="P:peroxisome membrane biogenesis"/>
    <property type="evidence" value="ECO:0000314"/>
    <property type="project" value="RGD"/>
</dbReference>
<dbReference type="GO" id="GO:0007031">
    <property type="term" value="P:peroxisome organization"/>
    <property type="evidence" value="ECO:0000250"/>
    <property type="project" value="UniProtKB"/>
</dbReference>
<dbReference type="GO" id="GO:0044375">
    <property type="term" value="P:regulation of peroxisome size"/>
    <property type="evidence" value="ECO:0000266"/>
    <property type="project" value="RGD"/>
</dbReference>
<dbReference type="GO" id="GO:0007165">
    <property type="term" value="P:signal transduction"/>
    <property type="evidence" value="ECO:0000250"/>
    <property type="project" value="UniProtKB"/>
</dbReference>
<dbReference type="InterPro" id="IPR008733">
    <property type="entry name" value="PEX11"/>
</dbReference>
<dbReference type="PANTHER" id="PTHR12652">
    <property type="entry name" value="PEROXISOMAL BIOGENESIS FACTOR 11"/>
    <property type="match status" value="1"/>
</dbReference>
<dbReference type="PANTHER" id="PTHR12652:SF22">
    <property type="entry name" value="PEROXISOMAL MEMBRANE PROTEIN 11A"/>
    <property type="match status" value="1"/>
</dbReference>
<dbReference type="Pfam" id="PF05648">
    <property type="entry name" value="PEX11"/>
    <property type="match status" value="1"/>
</dbReference>
<name>PX11A_RAT</name>